<protein>
    <recommendedName>
        <fullName>Increased recombination centers protein 19</fullName>
    </recommendedName>
</protein>
<dbReference type="EMBL" id="AAFW02000167">
    <property type="protein sequence ID" value="EDN59515.1"/>
    <property type="molecule type" value="Genomic_DNA"/>
</dbReference>
<dbReference type="HOGENOM" id="CLU_106818_0_0_1"/>
<dbReference type="Proteomes" id="UP000007060">
    <property type="component" value="Unassembled WGS sequence"/>
</dbReference>
<dbReference type="GO" id="GO:0030437">
    <property type="term" value="P:ascospore formation"/>
    <property type="evidence" value="ECO:0007669"/>
    <property type="project" value="InterPro"/>
</dbReference>
<dbReference type="InterPro" id="IPR016613">
    <property type="entry name" value="Irc19"/>
</dbReference>
<dbReference type="PIRSF" id="PIRSF013329">
    <property type="entry name" value="UCP013329"/>
    <property type="match status" value="1"/>
</dbReference>
<proteinExistence type="inferred from homology"/>
<keyword id="KW-0749">Sporulation</keyword>
<accession>A7A0M4</accession>
<feature type="chain" id="PRO_0000399066" description="Increased recombination centers protein 19">
    <location>
        <begin position="1"/>
        <end position="230"/>
    </location>
</feature>
<organism>
    <name type="scientific">Saccharomyces cerevisiae (strain YJM789)</name>
    <name type="common">Baker's yeast</name>
    <dbReference type="NCBI Taxonomy" id="307796"/>
    <lineage>
        <taxon>Eukaryota</taxon>
        <taxon>Fungi</taxon>
        <taxon>Dikarya</taxon>
        <taxon>Ascomycota</taxon>
        <taxon>Saccharomycotina</taxon>
        <taxon>Saccharomycetes</taxon>
        <taxon>Saccharomycetales</taxon>
        <taxon>Saccharomycetaceae</taxon>
        <taxon>Saccharomyces</taxon>
    </lineage>
</organism>
<sequence>MRKPSITITTAKAIITPDYTLIKSHSKYQLPSRFQKLDADSPERSTVVKLFYRRFMRLKPFISNVKMVKDTYRDYVRYKFMKENYELKRYLVFNPDGLRSKIKLELLSNTKCCERILPVTEMQRTLEFVLKSCSYLPETKVQKWDIARDNTYCRQILKNLLTMQYEKYRSILHRGIGHDELDVKFSHLKTTSSPLTKLNKTEKKKIPLFKVFSDFDTTLIYLNETLGTRL</sequence>
<reference key="1">
    <citation type="journal article" date="2007" name="Proc. Natl. Acad. Sci. U.S.A.">
        <title>Genome sequencing and comparative analysis of Saccharomyces cerevisiae strain YJM789.</title>
        <authorList>
            <person name="Wei W."/>
            <person name="McCusker J.H."/>
            <person name="Hyman R.W."/>
            <person name="Jones T."/>
            <person name="Ning Y."/>
            <person name="Cao Z."/>
            <person name="Gu Z."/>
            <person name="Bruno D."/>
            <person name="Miranda M."/>
            <person name="Nguyen M."/>
            <person name="Wilhelmy J."/>
            <person name="Komp C."/>
            <person name="Tamse R."/>
            <person name="Wang X."/>
            <person name="Jia P."/>
            <person name="Luedi P."/>
            <person name="Oefner P.J."/>
            <person name="David L."/>
            <person name="Dietrich F.S."/>
            <person name="Li Y."/>
            <person name="Davis R.W."/>
            <person name="Steinmetz L.M."/>
        </authorList>
    </citation>
    <scope>NUCLEOTIDE SEQUENCE [LARGE SCALE GENOMIC DNA]</scope>
    <source>
        <strain>YJM789</strain>
    </source>
</reference>
<comment type="function">
    <text evidence="1">Involved in sporulation and maintenance of the mitochondrial DNA. Is probably involved in a pathway contributing to genomic integrity (By similarity).</text>
</comment>
<comment type="similarity">
    <text evidence="2">Belongs to the IRC19 family.</text>
</comment>
<evidence type="ECO:0000250" key="1"/>
<evidence type="ECO:0000305" key="2"/>
<name>IRC19_YEAS7</name>
<gene>
    <name type="primary">IRC19</name>
    <name type="synonym">RRG4</name>
    <name type="ORF">SCY_3548</name>
</gene>